<gene>
    <name type="primary">pruA</name>
</gene>
<protein>
    <recommendedName>
        <fullName>Delta-1-pyrroline-5-carboxylate dehydrogenase</fullName>
        <shortName>P5C dehydrogenase</shortName>
        <ecNumber>1.2.1.88</ecNumber>
    </recommendedName>
    <alternativeName>
        <fullName>L-glutamate gamma-semialdehyde dehydrogenase</fullName>
    </alternativeName>
</protein>
<feature type="chain" id="PRO_0000056501" description="Delta-1-pyrroline-5-carboxylate dehydrogenase">
    <location>
        <begin position="1"/>
        <end position="546"/>
    </location>
</feature>
<feature type="active site" description="Proton acceptor" evidence="2">
    <location>
        <position position="297"/>
    </location>
</feature>
<feature type="active site" description="Nucleophile" evidence="2">
    <location>
        <position position="331"/>
    </location>
</feature>
<feature type="binding site" evidence="1">
    <location>
        <begin position="279"/>
        <end position="284"/>
    </location>
    <ligand>
        <name>NAD(+)</name>
        <dbReference type="ChEBI" id="CHEBI:57540"/>
    </ligand>
</feature>
<feature type="site" description="Transition state stabilizer" evidence="1">
    <location>
        <position position="195"/>
    </location>
</feature>
<organism>
    <name type="scientific">Agaricus bisporus</name>
    <name type="common">White button mushroom</name>
    <dbReference type="NCBI Taxonomy" id="5341"/>
    <lineage>
        <taxon>Eukaryota</taxon>
        <taxon>Fungi</taxon>
        <taxon>Dikarya</taxon>
        <taxon>Basidiomycota</taxon>
        <taxon>Agaricomycotina</taxon>
        <taxon>Agaricomycetes</taxon>
        <taxon>Agaricomycetidae</taxon>
        <taxon>Agaricales</taxon>
        <taxon>Agaricineae</taxon>
        <taxon>Agaricaceae</taxon>
        <taxon>Agaricus</taxon>
    </lineage>
</organism>
<sequence>MATAQLATFKIPPVSNEPMLSYAPGSPERAGLQAALAEMQSQLPFEVPCIINGQEVRTNNIQKQPMPHDHARHLCTFHEGSPELVEKATCGALQAKDGWETMPWNDRAAIFLKAADLASGKYRYKLMAATMLGQGKNTWQAEIDAAAELADFFRFGVSYVEELYAQQPPKNAPGCWNRTEYRPLEGFVLAVSPFNFTAIGGNLPGSPALVGNVVVWKPAPAATYSNYLVFKILSEAGVPPGVIQFIPGGAEIVQAAIQSPNFRSLHFTGSTNVFKSLWKDISSNLDKYKVYPRIVGETGGKNWHVIHKSAEVRNAVLQSVRGAFEYQGQKCSALSRLYVSRSVWENGFKTQYLEEIAKIKVGPCLDWNNYMGPVIGRRAYDNITGFIKKAKEEGGEVLIGGSGDDSKGFFIQPTVILTKVPRSTTMVGEIFGPVVTAYVFEDSDYEKTLELIDTTSIYGLTGAIFASERQALLTATNRSRNAAGNIYYNEKCTGAVVGQQPFGGARGSGTNDKAGSISIFYRFVSARSIKENFVGLEDFHYPSNLV</sequence>
<comment type="catalytic activity">
    <reaction>
        <text>L-glutamate 5-semialdehyde + NAD(+) + H2O = L-glutamate + NADH + 2 H(+)</text>
        <dbReference type="Rhea" id="RHEA:30235"/>
        <dbReference type="ChEBI" id="CHEBI:15377"/>
        <dbReference type="ChEBI" id="CHEBI:15378"/>
        <dbReference type="ChEBI" id="CHEBI:29985"/>
        <dbReference type="ChEBI" id="CHEBI:57540"/>
        <dbReference type="ChEBI" id="CHEBI:57945"/>
        <dbReference type="ChEBI" id="CHEBI:58066"/>
        <dbReference type="EC" id="1.2.1.88"/>
    </reaction>
</comment>
<comment type="pathway">
    <text>Amino-acid degradation; L-proline degradation into L-glutamate; L-glutamate from L-proline: step 2/2.</text>
</comment>
<comment type="subcellular location">
    <subcellularLocation>
        <location>Cytoplasm</location>
    </subcellularLocation>
</comment>
<comment type="similarity">
    <text evidence="3">Belongs to the aldehyde dehydrogenase family.</text>
</comment>
<proteinExistence type="inferred from homology"/>
<evidence type="ECO:0000250" key="1"/>
<evidence type="ECO:0000255" key="2">
    <source>
        <dbReference type="PROSITE-ProRule" id="PRU10008"/>
    </source>
</evidence>
<evidence type="ECO:0000305" key="3"/>
<dbReference type="EC" id="1.2.1.88"/>
<dbReference type="EMBL" id="X95584">
    <property type="protein sequence ID" value="CAA64836.1"/>
    <property type="molecule type" value="Genomic_DNA"/>
</dbReference>
<dbReference type="SMR" id="P78568"/>
<dbReference type="UniPathway" id="UPA00261">
    <property type="reaction ID" value="UER00374"/>
</dbReference>
<dbReference type="GO" id="GO:0005759">
    <property type="term" value="C:mitochondrial matrix"/>
    <property type="evidence" value="ECO:0007669"/>
    <property type="project" value="TreeGrafter"/>
</dbReference>
<dbReference type="GO" id="GO:0003842">
    <property type="term" value="F:1-pyrroline-5-carboxylate dehydrogenase activity"/>
    <property type="evidence" value="ECO:0007669"/>
    <property type="project" value="UniProtKB-EC"/>
</dbReference>
<dbReference type="GO" id="GO:0010133">
    <property type="term" value="P:proline catabolic process to glutamate"/>
    <property type="evidence" value="ECO:0007669"/>
    <property type="project" value="UniProtKB-UniPathway"/>
</dbReference>
<dbReference type="CDD" id="cd07123">
    <property type="entry name" value="ALDH_F4-17_P5CDH"/>
    <property type="match status" value="1"/>
</dbReference>
<dbReference type="FunFam" id="3.40.605.10:FF:000006">
    <property type="entry name" value="1-pyrroline-5-carboxylate dehydrogenase"/>
    <property type="match status" value="1"/>
</dbReference>
<dbReference type="FunFam" id="3.40.309.10:FF:000005">
    <property type="entry name" value="1-pyrroline-5-carboxylate dehydrogenase 1"/>
    <property type="match status" value="1"/>
</dbReference>
<dbReference type="Gene3D" id="3.40.605.10">
    <property type="entry name" value="Aldehyde Dehydrogenase, Chain A, domain 1"/>
    <property type="match status" value="1"/>
</dbReference>
<dbReference type="Gene3D" id="3.40.309.10">
    <property type="entry name" value="Aldehyde Dehydrogenase, Chain A, domain 2"/>
    <property type="match status" value="1"/>
</dbReference>
<dbReference type="InterPro" id="IPR016161">
    <property type="entry name" value="Ald_DH/histidinol_DH"/>
</dbReference>
<dbReference type="InterPro" id="IPR016163">
    <property type="entry name" value="Ald_DH_C"/>
</dbReference>
<dbReference type="InterPro" id="IPR016160">
    <property type="entry name" value="Ald_DH_CS_CYS"/>
</dbReference>
<dbReference type="InterPro" id="IPR016162">
    <property type="entry name" value="Ald_DH_N"/>
</dbReference>
<dbReference type="InterPro" id="IPR015590">
    <property type="entry name" value="Aldehyde_DH_dom"/>
</dbReference>
<dbReference type="InterPro" id="IPR005931">
    <property type="entry name" value="P5CDH/ALDH4A1"/>
</dbReference>
<dbReference type="InterPro" id="IPR050485">
    <property type="entry name" value="Proline_metab_enzyme"/>
</dbReference>
<dbReference type="NCBIfam" id="TIGR01236">
    <property type="entry name" value="D1pyr5carbox1"/>
    <property type="match status" value="1"/>
</dbReference>
<dbReference type="PANTHER" id="PTHR42862">
    <property type="entry name" value="DELTA-1-PYRROLINE-5-CARBOXYLATE DEHYDROGENASE 1, ISOFORM A-RELATED"/>
    <property type="match status" value="1"/>
</dbReference>
<dbReference type="PANTHER" id="PTHR42862:SF1">
    <property type="entry name" value="DELTA-1-PYRROLINE-5-CARBOXYLATE DEHYDROGENASE 2, ISOFORM A-RELATED"/>
    <property type="match status" value="1"/>
</dbReference>
<dbReference type="Pfam" id="PF00171">
    <property type="entry name" value="Aldedh"/>
    <property type="match status" value="1"/>
</dbReference>
<dbReference type="SUPFAM" id="SSF53720">
    <property type="entry name" value="ALDH-like"/>
    <property type="match status" value="1"/>
</dbReference>
<dbReference type="PROSITE" id="PS00070">
    <property type="entry name" value="ALDEHYDE_DEHYDR_CYS"/>
    <property type="match status" value="1"/>
</dbReference>
<accession>P78568</accession>
<reference key="1">
    <citation type="journal article" date="1997" name="Appl. Environ. Microbiol.">
        <title>The Agaricus bisporus pruA gene encodes a cytosolic delta 1-pyrroline-5-carboxylate dehydrogenase which is expressed in fruit bodies but not in gill tissue.</title>
        <authorList>
            <person name="Schaap P.J."/>
            <person name="Mueller Y."/>
            <person name="Sonnenberg A.S.M."/>
            <person name="van Griensven L.J.L.D."/>
            <person name="Visser J."/>
        </authorList>
    </citation>
    <scope>NUCLEOTIDE SEQUENCE [GENOMIC DNA]</scope>
    <source>
        <strain>Horst H39</strain>
    </source>
</reference>
<keyword id="KW-0963">Cytoplasm</keyword>
<keyword id="KW-0520">NAD</keyword>
<keyword id="KW-0560">Oxidoreductase</keyword>
<keyword id="KW-0642">Proline metabolism</keyword>
<name>PUT2_AGABI</name>